<gene>
    <name evidence="2" type="primary">ddl</name>
    <name type="ordered locus">BMASAVP1_A0470</name>
</gene>
<evidence type="ECO:0000250" key="1"/>
<evidence type="ECO:0000255" key="2">
    <source>
        <dbReference type="HAMAP-Rule" id="MF_00047"/>
    </source>
</evidence>
<proteinExistence type="inferred from homology"/>
<protein>
    <recommendedName>
        <fullName evidence="2">D-alanine--D-alanine ligase</fullName>
        <ecNumber evidence="2">6.3.2.4</ecNumber>
    </recommendedName>
    <alternativeName>
        <fullName evidence="2">D-Ala-D-Ala ligase</fullName>
    </alternativeName>
    <alternativeName>
        <fullName evidence="2">D-alanylalanine synthetase</fullName>
    </alternativeName>
</protein>
<keyword id="KW-0067">ATP-binding</keyword>
<keyword id="KW-0133">Cell shape</keyword>
<keyword id="KW-0961">Cell wall biogenesis/degradation</keyword>
<keyword id="KW-0963">Cytoplasm</keyword>
<keyword id="KW-0436">Ligase</keyword>
<keyword id="KW-0460">Magnesium</keyword>
<keyword id="KW-0464">Manganese</keyword>
<keyword id="KW-0479">Metal-binding</keyword>
<keyword id="KW-0547">Nucleotide-binding</keyword>
<keyword id="KW-0573">Peptidoglycan synthesis</keyword>
<feature type="chain" id="PRO_0000341073" description="D-alanine--D-alanine ligase">
    <location>
        <begin position="1"/>
        <end position="312"/>
    </location>
</feature>
<feature type="domain" description="ATP-grasp" evidence="2">
    <location>
        <begin position="108"/>
        <end position="308"/>
    </location>
</feature>
<feature type="binding site" evidence="2">
    <location>
        <begin position="138"/>
        <end position="193"/>
    </location>
    <ligand>
        <name>ATP</name>
        <dbReference type="ChEBI" id="CHEBI:30616"/>
    </ligand>
</feature>
<feature type="binding site" evidence="2">
    <location>
        <position position="262"/>
    </location>
    <ligand>
        <name>Mg(2+)</name>
        <dbReference type="ChEBI" id="CHEBI:18420"/>
        <label>1</label>
    </ligand>
</feature>
<feature type="binding site" evidence="2">
    <location>
        <position position="275"/>
    </location>
    <ligand>
        <name>Mg(2+)</name>
        <dbReference type="ChEBI" id="CHEBI:18420"/>
        <label>1</label>
    </ligand>
</feature>
<feature type="binding site" evidence="2">
    <location>
        <position position="275"/>
    </location>
    <ligand>
        <name>Mg(2+)</name>
        <dbReference type="ChEBI" id="CHEBI:18420"/>
        <label>2</label>
    </ligand>
</feature>
<feature type="binding site" evidence="2">
    <location>
        <position position="277"/>
    </location>
    <ligand>
        <name>Mg(2+)</name>
        <dbReference type="ChEBI" id="CHEBI:18420"/>
        <label>2</label>
    </ligand>
</feature>
<dbReference type="EC" id="6.3.2.4" evidence="2"/>
<dbReference type="EMBL" id="CP000526">
    <property type="protein sequence ID" value="ABM50023.1"/>
    <property type="molecule type" value="Genomic_DNA"/>
</dbReference>
<dbReference type="RefSeq" id="WP_004194254.1">
    <property type="nucleotide sequence ID" value="NC_008785.1"/>
</dbReference>
<dbReference type="SMR" id="A1V0R6"/>
<dbReference type="KEGG" id="bmv:BMASAVP1_A0470"/>
<dbReference type="HOGENOM" id="CLU_039268_1_2_4"/>
<dbReference type="UniPathway" id="UPA00219"/>
<dbReference type="GO" id="GO:0005829">
    <property type="term" value="C:cytosol"/>
    <property type="evidence" value="ECO:0007669"/>
    <property type="project" value="TreeGrafter"/>
</dbReference>
<dbReference type="GO" id="GO:0005524">
    <property type="term" value="F:ATP binding"/>
    <property type="evidence" value="ECO:0007669"/>
    <property type="project" value="UniProtKB-KW"/>
</dbReference>
<dbReference type="GO" id="GO:0008716">
    <property type="term" value="F:D-alanine-D-alanine ligase activity"/>
    <property type="evidence" value="ECO:0007669"/>
    <property type="project" value="UniProtKB-UniRule"/>
</dbReference>
<dbReference type="GO" id="GO:0046872">
    <property type="term" value="F:metal ion binding"/>
    <property type="evidence" value="ECO:0007669"/>
    <property type="project" value="UniProtKB-KW"/>
</dbReference>
<dbReference type="GO" id="GO:0071555">
    <property type="term" value="P:cell wall organization"/>
    <property type="evidence" value="ECO:0007669"/>
    <property type="project" value="UniProtKB-KW"/>
</dbReference>
<dbReference type="GO" id="GO:0009252">
    <property type="term" value="P:peptidoglycan biosynthetic process"/>
    <property type="evidence" value="ECO:0007669"/>
    <property type="project" value="UniProtKB-UniRule"/>
</dbReference>
<dbReference type="GO" id="GO:0008360">
    <property type="term" value="P:regulation of cell shape"/>
    <property type="evidence" value="ECO:0007669"/>
    <property type="project" value="UniProtKB-KW"/>
</dbReference>
<dbReference type="FunFam" id="3.30.1490.20:FF:000007">
    <property type="entry name" value="D-alanine--D-alanine ligase"/>
    <property type="match status" value="1"/>
</dbReference>
<dbReference type="FunFam" id="3.30.470.20:FF:000008">
    <property type="entry name" value="D-alanine--D-alanine ligase"/>
    <property type="match status" value="1"/>
</dbReference>
<dbReference type="FunFam" id="3.40.50.20:FF:000013">
    <property type="entry name" value="D-alanine--D-alanine ligase"/>
    <property type="match status" value="1"/>
</dbReference>
<dbReference type="Gene3D" id="3.40.50.20">
    <property type="match status" value="1"/>
</dbReference>
<dbReference type="Gene3D" id="3.30.1490.20">
    <property type="entry name" value="ATP-grasp fold, A domain"/>
    <property type="match status" value="1"/>
</dbReference>
<dbReference type="Gene3D" id="3.30.470.20">
    <property type="entry name" value="ATP-grasp fold, B domain"/>
    <property type="match status" value="1"/>
</dbReference>
<dbReference type="HAMAP" id="MF_00047">
    <property type="entry name" value="Dala_Dala_lig"/>
    <property type="match status" value="1"/>
</dbReference>
<dbReference type="InterPro" id="IPR011761">
    <property type="entry name" value="ATP-grasp"/>
</dbReference>
<dbReference type="InterPro" id="IPR013815">
    <property type="entry name" value="ATP_grasp_subdomain_1"/>
</dbReference>
<dbReference type="InterPro" id="IPR000291">
    <property type="entry name" value="D-Ala_lig_Van_CS"/>
</dbReference>
<dbReference type="InterPro" id="IPR005905">
    <property type="entry name" value="D_ala_D_ala"/>
</dbReference>
<dbReference type="InterPro" id="IPR011095">
    <property type="entry name" value="Dala_Dala_lig_C"/>
</dbReference>
<dbReference type="InterPro" id="IPR011127">
    <property type="entry name" value="Dala_Dala_lig_N"/>
</dbReference>
<dbReference type="InterPro" id="IPR016185">
    <property type="entry name" value="PreATP-grasp_dom_sf"/>
</dbReference>
<dbReference type="NCBIfam" id="TIGR01205">
    <property type="entry name" value="D_ala_D_alaTIGR"/>
    <property type="match status" value="1"/>
</dbReference>
<dbReference type="NCBIfam" id="NF002378">
    <property type="entry name" value="PRK01372.1"/>
    <property type="match status" value="1"/>
</dbReference>
<dbReference type="PANTHER" id="PTHR23132">
    <property type="entry name" value="D-ALANINE--D-ALANINE LIGASE"/>
    <property type="match status" value="1"/>
</dbReference>
<dbReference type="PANTHER" id="PTHR23132:SF23">
    <property type="entry name" value="D-ALANINE--D-ALANINE LIGASE B"/>
    <property type="match status" value="1"/>
</dbReference>
<dbReference type="Pfam" id="PF07478">
    <property type="entry name" value="Dala_Dala_lig_C"/>
    <property type="match status" value="1"/>
</dbReference>
<dbReference type="Pfam" id="PF01820">
    <property type="entry name" value="Dala_Dala_lig_N"/>
    <property type="match status" value="1"/>
</dbReference>
<dbReference type="PIRSF" id="PIRSF039102">
    <property type="entry name" value="Ddl/VanB"/>
    <property type="match status" value="1"/>
</dbReference>
<dbReference type="SUPFAM" id="SSF56059">
    <property type="entry name" value="Glutathione synthetase ATP-binding domain-like"/>
    <property type="match status" value="1"/>
</dbReference>
<dbReference type="SUPFAM" id="SSF52440">
    <property type="entry name" value="PreATP-grasp domain"/>
    <property type="match status" value="1"/>
</dbReference>
<dbReference type="PROSITE" id="PS50975">
    <property type="entry name" value="ATP_GRASP"/>
    <property type="match status" value="1"/>
</dbReference>
<dbReference type="PROSITE" id="PS00843">
    <property type="entry name" value="DALA_DALA_LIGASE_1"/>
    <property type="match status" value="1"/>
</dbReference>
<dbReference type="PROSITE" id="PS00844">
    <property type="entry name" value="DALA_DALA_LIGASE_2"/>
    <property type="match status" value="1"/>
</dbReference>
<comment type="function">
    <text evidence="2">Cell wall formation.</text>
</comment>
<comment type="catalytic activity">
    <reaction evidence="2">
        <text>2 D-alanine + ATP = D-alanyl-D-alanine + ADP + phosphate + H(+)</text>
        <dbReference type="Rhea" id="RHEA:11224"/>
        <dbReference type="ChEBI" id="CHEBI:15378"/>
        <dbReference type="ChEBI" id="CHEBI:30616"/>
        <dbReference type="ChEBI" id="CHEBI:43474"/>
        <dbReference type="ChEBI" id="CHEBI:57416"/>
        <dbReference type="ChEBI" id="CHEBI:57822"/>
        <dbReference type="ChEBI" id="CHEBI:456216"/>
        <dbReference type="EC" id="6.3.2.4"/>
    </reaction>
</comment>
<comment type="cofactor">
    <cofactor evidence="1">
        <name>Mg(2+)</name>
        <dbReference type="ChEBI" id="CHEBI:18420"/>
    </cofactor>
    <cofactor evidence="1">
        <name>Mn(2+)</name>
        <dbReference type="ChEBI" id="CHEBI:29035"/>
    </cofactor>
    <text evidence="1">Binds 2 magnesium or manganese ions per subunit.</text>
</comment>
<comment type="pathway">
    <text evidence="2">Cell wall biogenesis; peptidoglycan biosynthesis.</text>
</comment>
<comment type="subcellular location">
    <subcellularLocation>
        <location evidence="2">Cytoplasm</location>
    </subcellularLocation>
</comment>
<comment type="similarity">
    <text evidence="2">Belongs to the D-alanine--D-alanine ligase family.</text>
</comment>
<accession>A1V0R6</accession>
<reference key="1">
    <citation type="journal article" date="2010" name="Genome Biol. Evol.">
        <title>Continuing evolution of Burkholderia mallei through genome reduction and large-scale rearrangements.</title>
        <authorList>
            <person name="Losada L."/>
            <person name="Ronning C.M."/>
            <person name="DeShazer D."/>
            <person name="Woods D."/>
            <person name="Fedorova N."/>
            <person name="Kim H.S."/>
            <person name="Shabalina S.A."/>
            <person name="Pearson T.R."/>
            <person name="Brinkac L."/>
            <person name="Tan P."/>
            <person name="Nandi T."/>
            <person name="Crabtree J."/>
            <person name="Badger J."/>
            <person name="Beckstrom-Sternberg S."/>
            <person name="Saqib M."/>
            <person name="Schutzer S.E."/>
            <person name="Keim P."/>
            <person name="Nierman W.C."/>
        </authorList>
    </citation>
    <scope>NUCLEOTIDE SEQUENCE [LARGE SCALE GENOMIC DNA]</scope>
    <source>
        <strain>SAVP1</strain>
    </source>
</reference>
<name>DDL_BURMS</name>
<sequence length="312" mass="33341">MSGIDPKRFGKVAVLLGGDSAEREVSLNSGRLVLQGLRDAGIDAHPFDPAQRPLAALKDEGFVRAFNALHGGYGENGQIQGALDFYGIRYTGSGVLGSALGLDKFRTKLVWQQTGIPTPPFETVMRGDDYAARAQDIVAKLGVPLFVKPASEGSSVAVEKVKSADALPAALEEAAKHDKIVIVEKSIEGGGEYTACIAADLDLPLIRIVPAGEFYDYHAKYIANDTQYLIPCGLDAAKEAEFKRIARRAFDVLGCTDWGRADFMLDAAGNPYFLEVNTAPGMTDHSLPPKAARAVGIGYSELVVKVLSLTLD</sequence>
<organism>
    <name type="scientific">Burkholderia mallei (strain SAVP1)</name>
    <dbReference type="NCBI Taxonomy" id="320388"/>
    <lineage>
        <taxon>Bacteria</taxon>
        <taxon>Pseudomonadati</taxon>
        <taxon>Pseudomonadota</taxon>
        <taxon>Betaproteobacteria</taxon>
        <taxon>Burkholderiales</taxon>
        <taxon>Burkholderiaceae</taxon>
        <taxon>Burkholderia</taxon>
        <taxon>pseudomallei group</taxon>
    </lineage>
</organism>